<keyword id="KW-0235">DNA replication</keyword>
<proteinExistence type="inferred from homology"/>
<name>DIAA_ECOSM</name>
<organism>
    <name type="scientific">Escherichia coli (strain SMS-3-5 / SECEC)</name>
    <dbReference type="NCBI Taxonomy" id="439855"/>
    <lineage>
        <taxon>Bacteria</taxon>
        <taxon>Pseudomonadati</taxon>
        <taxon>Pseudomonadota</taxon>
        <taxon>Gammaproteobacteria</taxon>
        <taxon>Enterobacterales</taxon>
        <taxon>Enterobacteriaceae</taxon>
        <taxon>Escherichia</taxon>
    </lineage>
</organism>
<comment type="function">
    <text evidence="1">Required for the timely initiation of chromosomal replication via direct interactions with the DnaA initiator protein.</text>
</comment>
<comment type="subunit">
    <text evidence="1">Homotetramer; dimer of dimers.</text>
</comment>
<comment type="similarity">
    <text evidence="1">Belongs to the SIS family. DiaA subfamily.</text>
</comment>
<dbReference type="EMBL" id="CP000970">
    <property type="protein sequence ID" value="ACB18021.1"/>
    <property type="molecule type" value="Genomic_DNA"/>
</dbReference>
<dbReference type="RefSeq" id="WP_001158035.1">
    <property type="nucleotide sequence ID" value="NC_010498.1"/>
</dbReference>
<dbReference type="SMR" id="B1LFQ0"/>
<dbReference type="GeneID" id="75206004"/>
<dbReference type="KEGG" id="ecm:EcSMS35_3444"/>
<dbReference type="HOGENOM" id="CLU_080999_3_1_6"/>
<dbReference type="Proteomes" id="UP000007011">
    <property type="component" value="Chromosome"/>
</dbReference>
<dbReference type="GO" id="GO:0097367">
    <property type="term" value="F:carbohydrate derivative binding"/>
    <property type="evidence" value="ECO:0007669"/>
    <property type="project" value="InterPro"/>
</dbReference>
<dbReference type="GO" id="GO:1901135">
    <property type="term" value="P:carbohydrate derivative metabolic process"/>
    <property type="evidence" value="ECO:0007669"/>
    <property type="project" value="InterPro"/>
</dbReference>
<dbReference type="GO" id="GO:0006260">
    <property type="term" value="P:DNA replication"/>
    <property type="evidence" value="ECO:0007669"/>
    <property type="project" value="UniProtKB-UniRule"/>
</dbReference>
<dbReference type="CDD" id="cd05006">
    <property type="entry name" value="SIS_GmhA"/>
    <property type="match status" value="1"/>
</dbReference>
<dbReference type="FunFam" id="3.40.50.10490:FF:000006">
    <property type="entry name" value="DnaA initiator-associating protein DiaA"/>
    <property type="match status" value="1"/>
</dbReference>
<dbReference type="Gene3D" id="3.40.50.10490">
    <property type="entry name" value="Glucose-6-phosphate isomerase like protein, domain 1"/>
    <property type="match status" value="1"/>
</dbReference>
<dbReference type="HAMAP" id="MF_01157">
    <property type="entry name" value="SIS_DiaA"/>
    <property type="match status" value="1"/>
</dbReference>
<dbReference type="InterPro" id="IPR023070">
    <property type="entry name" value="DiaA"/>
</dbReference>
<dbReference type="InterPro" id="IPR035461">
    <property type="entry name" value="GmhA/DiaA"/>
</dbReference>
<dbReference type="InterPro" id="IPR001347">
    <property type="entry name" value="SIS_dom"/>
</dbReference>
<dbReference type="InterPro" id="IPR046348">
    <property type="entry name" value="SIS_dom_sf"/>
</dbReference>
<dbReference type="InterPro" id="IPR050099">
    <property type="entry name" value="SIS_GmhA/DiaA_subfam"/>
</dbReference>
<dbReference type="NCBIfam" id="NF008138">
    <property type="entry name" value="PRK10886.1"/>
    <property type="match status" value="1"/>
</dbReference>
<dbReference type="NCBIfam" id="NF010546">
    <property type="entry name" value="PRK13936.1"/>
    <property type="match status" value="1"/>
</dbReference>
<dbReference type="PANTHER" id="PTHR30390:SF6">
    <property type="entry name" value="DNAA INITIATOR-ASSOCIATING PROTEIN DIAA"/>
    <property type="match status" value="1"/>
</dbReference>
<dbReference type="PANTHER" id="PTHR30390">
    <property type="entry name" value="SEDOHEPTULOSE 7-PHOSPHATE ISOMERASE / DNAA INITIATOR-ASSOCIATING FACTOR FOR REPLICATION INITIATION"/>
    <property type="match status" value="1"/>
</dbReference>
<dbReference type="Pfam" id="PF13580">
    <property type="entry name" value="SIS_2"/>
    <property type="match status" value="1"/>
</dbReference>
<dbReference type="SUPFAM" id="SSF53697">
    <property type="entry name" value="SIS domain"/>
    <property type="match status" value="1"/>
</dbReference>
<dbReference type="PROSITE" id="PS51464">
    <property type="entry name" value="SIS"/>
    <property type="match status" value="1"/>
</dbReference>
<reference key="1">
    <citation type="journal article" date="2008" name="J. Bacteriol.">
        <title>Insights into the environmental resistance gene pool from the genome sequence of the multidrug-resistant environmental isolate Escherichia coli SMS-3-5.</title>
        <authorList>
            <person name="Fricke W.F."/>
            <person name="Wright M.S."/>
            <person name="Lindell A.H."/>
            <person name="Harkins D.M."/>
            <person name="Baker-Austin C."/>
            <person name="Ravel J."/>
            <person name="Stepanauskas R."/>
        </authorList>
    </citation>
    <scope>NUCLEOTIDE SEQUENCE [LARGE SCALE GENOMIC DNA]</scope>
    <source>
        <strain>SMS-3-5 / SECEC</strain>
    </source>
</reference>
<feature type="chain" id="PRO_1000137791" description="DnaA initiator-associating protein DiaA">
    <location>
        <begin position="1"/>
        <end position="196"/>
    </location>
</feature>
<feature type="domain" description="SIS" evidence="1">
    <location>
        <begin position="34"/>
        <end position="196"/>
    </location>
</feature>
<evidence type="ECO:0000255" key="1">
    <source>
        <dbReference type="HAMAP-Rule" id="MF_01157"/>
    </source>
</evidence>
<protein>
    <recommendedName>
        <fullName evidence="1">DnaA initiator-associating protein DiaA</fullName>
    </recommendedName>
</protein>
<sequence length="196" mass="21090">MQERIKACFTESIQTQIAAAEALPDAISRAAMTLVQSLLNGNKILCCGNGTSAANAQHFAASMINRFETERPSLPAIALNTDNVVLTAIANDRLHDEVYAKQVRALGHAGDVLLAISTRGNSRDIVKAVEAAVTRDMTIVALTGYDGGELAGLLGPQDVEIRIPSHRSARIQEMHMLTVNCLCDLIDNTLFPHQDV</sequence>
<gene>
    <name evidence="1" type="primary">diaA</name>
    <name type="ordered locus">EcSMS35_3444</name>
</gene>
<accession>B1LFQ0</accession>